<keyword id="KW-0342">GTP-binding</keyword>
<keyword id="KW-0547">Nucleotide-binding</keyword>
<keyword id="KW-0677">Repeat</keyword>
<keyword id="KW-0690">Ribosome biogenesis</keyword>
<evidence type="ECO:0000255" key="1">
    <source>
        <dbReference type="HAMAP-Rule" id="MF_00195"/>
    </source>
</evidence>
<accession>Q87S12</accession>
<reference key="1">
    <citation type="journal article" date="2003" name="Lancet">
        <title>Genome sequence of Vibrio parahaemolyticus: a pathogenic mechanism distinct from that of V. cholerae.</title>
        <authorList>
            <person name="Makino K."/>
            <person name="Oshima K."/>
            <person name="Kurokawa K."/>
            <person name="Yokoyama K."/>
            <person name="Uda T."/>
            <person name="Tagomori K."/>
            <person name="Iijima Y."/>
            <person name="Najima M."/>
            <person name="Nakano M."/>
            <person name="Yamashita A."/>
            <person name="Kubota Y."/>
            <person name="Kimura S."/>
            <person name="Yasunaga T."/>
            <person name="Honda T."/>
            <person name="Shinagawa H."/>
            <person name="Hattori M."/>
            <person name="Iida T."/>
        </authorList>
    </citation>
    <scope>NUCLEOTIDE SEQUENCE [LARGE SCALE GENOMIC DNA]</scope>
    <source>
        <strain>RIMD 2210633</strain>
    </source>
</reference>
<proteinExistence type="inferred from homology"/>
<dbReference type="EMBL" id="BA000031">
    <property type="protein sequence ID" value="BAC58875.1"/>
    <property type="molecule type" value="Genomic_DNA"/>
</dbReference>
<dbReference type="RefSeq" id="NP_796991.1">
    <property type="nucleotide sequence ID" value="NC_004603.1"/>
</dbReference>
<dbReference type="RefSeq" id="WP_005483018.1">
    <property type="nucleotide sequence ID" value="NC_004603.1"/>
</dbReference>
<dbReference type="SMR" id="Q87S12"/>
<dbReference type="GeneID" id="1188087"/>
<dbReference type="KEGG" id="vpa:VP0612"/>
<dbReference type="PATRIC" id="fig|223926.6.peg.580"/>
<dbReference type="eggNOG" id="COG1160">
    <property type="taxonomic scope" value="Bacteria"/>
</dbReference>
<dbReference type="HOGENOM" id="CLU_016077_6_2_6"/>
<dbReference type="Proteomes" id="UP000002493">
    <property type="component" value="Chromosome 1"/>
</dbReference>
<dbReference type="GO" id="GO:0016887">
    <property type="term" value="F:ATP hydrolysis activity"/>
    <property type="evidence" value="ECO:0007669"/>
    <property type="project" value="InterPro"/>
</dbReference>
<dbReference type="GO" id="GO:0005525">
    <property type="term" value="F:GTP binding"/>
    <property type="evidence" value="ECO:0007669"/>
    <property type="project" value="UniProtKB-UniRule"/>
</dbReference>
<dbReference type="GO" id="GO:0043022">
    <property type="term" value="F:ribosome binding"/>
    <property type="evidence" value="ECO:0007669"/>
    <property type="project" value="TreeGrafter"/>
</dbReference>
<dbReference type="GO" id="GO:0042254">
    <property type="term" value="P:ribosome biogenesis"/>
    <property type="evidence" value="ECO:0007669"/>
    <property type="project" value="UniProtKB-KW"/>
</dbReference>
<dbReference type="CDD" id="cd01894">
    <property type="entry name" value="EngA1"/>
    <property type="match status" value="1"/>
</dbReference>
<dbReference type="CDD" id="cd01895">
    <property type="entry name" value="EngA2"/>
    <property type="match status" value="1"/>
</dbReference>
<dbReference type="FunFam" id="3.30.300.20:FF:000004">
    <property type="entry name" value="GTPase Der"/>
    <property type="match status" value="1"/>
</dbReference>
<dbReference type="FunFam" id="3.40.50.300:FF:000040">
    <property type="entry name" value="GTPase Der"/>
    <property type="match status" value="1"/>
</dbReference>
<dbReference type="FunFam" id="3.40.50.300:FF:000057">
    <property type="entry name" value="GTPase Der"/>
    <property type="match status" value="1"/>
</dbReference>
<dbReference type="Gene3D" id="3.30.300.20">
    <property type="match status" value="1"/>
</dbReference>
<dbReference type="Gene3D" id="3.40.50.300">
    <property type="entry name" value="P-loop containing nucleotide triphosphate hydrolases"/>
    <property type="match status" value="2"/>
</dbReference>
<dbReference type="HAMAP" id="MF_00195">
    <property type="entry name" value="GTPase_Der"/>
    <property type="match status" value="1"/>
</dbReference>
<dbReference type="InterPro" id="IPR003593">
    <property type="entry name" value="AAA+_ATPase"/>
</dbReference>
<dbReference type="InterPro" id="IPR031166">
    <property type="entry name" value="G_ENGA"/>
</dbReference>
<dbReference type="InterPro" id="IPR006073">
    <property type="entry name" value="GTP-bd"/>
</dbReference>
<dbReference type="InterPro" id="IPR016484">
    <property type="entry name" value="GTPase_Der"/>
</dbReference>
<dbReference type="InterPro" id="IPR032859">
    <property type="entry name" value="KH_dom-like"/>
</dbReference>
<dbReference type="InterPro" id="IPR015946">
    <property type="entry name" value="KH_dom-like_a/b"/>
</dbReference>
<dbReference type="InterPro" id="IPR027417">
    <property type="entry name" value="P-loop_NTPase"/>
</dbReference>
<dbReference type="InterPro" id="IPR005225">
    <property type="entry name" value="Small_GTP-bd"/>
</dbReference>
<dbReference type="NCBIfam" id="TIGR03594">
    <property type="entry name" value="GTPase_EngA"/>
    <property type="match status" value="1"/>
</dbReference>
<dbReference type="NCBIfam" id="TIGR00231">
    <property type="entry name" value="small_GTP"/>
    <property type="match status" value="2"/>
</dbReference>
<dbReference type="PANTHER" id="PTHR43834">
    <property type="entry name" value="GTPASE DER"/>
    <property type="match status" value="1"/>
</dbReference>
<dbReference type="PANTHER" id="PTHR43834:SF6">
    <property type="entry name" value="GTPASE DER"/>
    <property type="match status" value="1"/>
</dbReference>
<dbReference type="Pfam" id="PF14714">
    <property type="entry name" value="KH_dom-like"/>
    <property type="match status" value="1"/>
</dbReference>
<dbReference type="Pfam" id="PF01926">
    <property type="entry name" value="MMR_HSR1"/>
    <property type="match status" value="2"/>
</dbReference>
<dbReference type="PIRSF" id="PIRSF006485">
    <property type="entry name" value="GTP-binding_EngA"/>
    <property type="match status" value="1"/>
</dbReference>
<dbReference type="PRINTS" id="PR00326">
    <property type="entry name" value="GTP1OBG"/>
</dbReference>
<dbReference type="SMART" id="SM00382">
    <property type="entry name" value="AAA"/>
    <property type="match status" value="2"/>
</dbReference>
<dbReference type="SUPFAM" id="SSF52540">
    <property type="entry name" value="P-loop containing nucleoside triphosphate hydrolases"/>
    <property type="match status" value="2"/>
</dbReference>
<dbReference type="PROSITE" id="PS51712">
    <property type="entry name" value="G_ENGA"/>
    <property type="match status" value="2"/>
</dbReference>
<gene>
    <name evidence="1" type="primary">der</name>
    <name type="synonym">engA</name>
    <name type="ordered locus">VP0612</name>
</gene>
<name>DER_VIBPA</name>
<feature type="chain" id="PRO_0000179069" description="GTPase Der">
    <location>
        <begin position="1"/>
        <end position="498"/>
    </location>
</feature>
<feature type="domain" description="EngA-type G 1">
    <location>
        <begin position="3"/>
        <end position="167"/>
    </location>
</feature>
<feature type="domain" description="EngA-type G 2">
    <location>
        <begin position="210"/>
        <end position="383"/>
    </location>
</feature>
<feature type="domain" description="KH-like" evidence="1">
    <location>
        <begin position="384"/>
        <end position="468"/>
    </location>
</feature>
<feature type="binding site" evidence="1">
    <location>
        <begin position="9"/>
        <end position="16"/>
    </location>
    <ligand>
        <name>GTP</name>
        <dbReference type="ChEBI" id="CHEBI:37565"/>
        <label>1</label>
    </ligand>
</feature>
<feature type="binding site" evidence="1">
    <location>
        <begin position="57"/>
        <end position="61"/>
    </location>
    <ligand>
        <name>GTP</name>
        <dbReference type="ChEBI" id="CHEBI:37565"/>
        <label>1</label>
    </ligand>
</feature>
<feature type="binding site" evidence="1">
    <location>
        <begin position="119"/>
        <end position="122"/>
    </location>
    <ligand>
        <name>GTP</name>
        <dbReference type="ChEBI" id="CHEBI:37565"/>
        <label>1</label>
    </ligand>
</feature>
<feature type="binding site" evidence="1">
    <location>
        <begin position="216"/>
        <end position="223"/>
    </location>
    <ligand>
        <name>GTP</name>
        <dbReference type="ChEBI" id="CHEBI:37565"/>
        <label>2</label>
    </ligand>
</feature>
<feature type="binding site" evidence="1">
    <location>
        <begin position="263"/>
        <end position="267"/>
    </location>
    <ligand>
        <name>GTP</name>
        <dbReference type="ChEBI" id="CHEBI:37565"/>
        <label>2</label>
    </ligand>
</feature>
<feature type="binding site" evidence="1">
    <location>
        <begin position="328"/>
        <end position="331"/>
    </location>
    <ligand>
        <name>GTP</name>
        <dbReference type="ChEBI" id="CHEBI:37565"/>
        <label>2</label>
    </ligand>
</feature>
<protein>
    <recommendedName>
        <fullName evidence="1">GTPase Der</fullName>
    </recommendedName>
    <alternativeName>
        <fullName evidence="1">GTP-binding protein EngA</fullName>
    </alternativeName>
</protein>
<comment type="function">
    <text evidence="1">GTPase that plays an essential role in the late steps of ribosome biogenesis.</text>
</comment>
<comment type="subunit">
    <text evidence="1">Associates with the 50S ribosomal subunit.</text>
</comment>
<comment type="similarity">
    <text evidence="1">Belongs to the TRAFAC class TrmE-Era-EngA-EngB-Septin-like GTPase superfamily. EngA (Der) GTPase family.</text>
</comment>
<sequence length="498" mass="55815">MVPVVALVGRPNVGKSTLFNRLTRTRDALVADFPGLTRDRKYGQARLDEEHEFIVIDTGGIDGTEEGVETKMAEQSLAAIDEADVVLFLVDGRAGLTPADEAIAAHLRKIEKPAMLVVNKIDGIDADAACADFWQLGVDDMYQIAAAHGRGVTALLERALAPFFDDLLTSESEEGEIEDLTEFEDAEIAPDEYTEEEAEAEFQRLQEQPIKLAIIGRPNVGKSTLTNRILGEERVVVYDMPGTTRDSIYIPMERDGREYVIIDTAGVRRRGRINETVEKFSVVKTLKAVEDANVVLLVIDARENISDQDLSLLGFALNAGRSIVLAVNKWDGLDNEVKENVKKELDRRLGFVDFARIHFISALHGTGVGHLFESIQEAYKSATTRVGTSVLTRIMKMATDDHQPPMVRGRRIKLKYAHAGGYNPPIVVIHGNMVRELPDSYKRYLMNYFRKSLEIMGTPIRINFQNSENPFENRANKLTLSQERKRKRMMSVVKNRKK</sequence>
<organism>
    <name type="scientific">Vibrio parahaemolyticus serotype O3:K6 (strain RIMD 2210633)</name>
    <dbReference type="NCBI Taxonomy" id="223926"/>
    <lineage>
        <taxon>Bacteria</taxon>
        <taxon>Pseudomonadati</taxon>
        <taxon>Pseudomonadota</taxon>
        <taxon>Gammaproteobacteria</taxon>
        <taxon>Vibrionales</taxon>
        <taxon>Vibrionaceae</taxon>
        <taxon>Vibrio</taxon>
    </lineage>
</organism>